<dbReference type="EC" id="2.7.11.1" evidence="3"/>
<dbReference type="EMBL" id="CP003822">
    <property type="protein sequence ID" value="AFR93777.2"/>
    <property type="molecule type" value="Genomic_DNA"/>
</dbReference>
<dbReference type="RefSeq" id="XP_012047847.1">
    <property type="nucleotide sequence ID" value="XM_012192457.1"/>
</dbReference>
<dbReference type="SMR" id="J9VH94"/>
<dbReference type="GeneID" id="23886463"/>
<dbReference type="KEGG" id="cng:CNAG_02915"/>
<dbReference type="VEuPathDB" id="FungiDB:CNAG_02915"/>
<dbReference type="HOGENOM" id="CLU_290852_0_0_1"/>
<dbReference type="OrthoDB" id="7652at5206"/>
<dbReference type="PHI-base" id="PHI:2955"/>
<dbReference type="Proteomes" id="UP000010091">
    <property type="component" value="Chromosome 3"/>
</dbReference>
<dbReference type="GO" id="GO:0005524">
    <property type="term" value="F:ATP binding"/>
    <property type="evidence" value="ECO:0007669"/>
    <property type="project" value="UniProtKB-KW"/>
</dbReference>
<dbReference type="GO" id="GO:0004674">
    <property type="term" value="F:protein serine/threonine kinase activity"/>
    <property type="evidence" value="ECO:0007669"/>
    <property type="project" value="UniProtKB-KW"/>
</dbReference>
<dbReference type="GO" id="GO:0035556">
    <property type="term" value="P:intracellular signal transduction"/>
    <property type="evidence" value="ECO:0007669"/>
    <property type="project" value="TreeGrafter"/>
</dbReference>
<dbReference type="GO" id="GO:1903139">
    <property type="term" value="P:positive regulation of cell integrity MAPK cascade"/>
    <property type="evidence" value="ECO:0000315"/>
    <property type="project" value="UniProtKB"/>
</dbReference>
<dbReference type="GO" id="GO:0090153">
    <property type="term" value="P:regulation of sphingolipid biosynthetic process"/>
    <property type="evidence" value="ECO:0000315"/>
    <property type="project" value="UniProtKB"/>
</dbReference>
<dbReference type="CDD" id="cd05581">
    <property type="entry name" value="STKc_PDK1"/>
    <property type="match status" value="1"/>
</dbReference>
<dbReference type="FunFam" id="1.10.510.10:FF:000534">
    <property type="entry name" value="Serine/threonine-protein kinase PKH2"/>
    <property type="match status" value="1"/>
</dbReference>
<dbReference type="Gene3D" id="3.30.200.20">
    <property type="entry name" value="Phosphorylase Kinase, domain 1"/>
    <property type="match status" value="2"/>
</dbReference>
<dbReference type="Gene3D" id="1.10.510.10">
    <property type="entry name" value="Transferase(Phosphotransferase) domain 1"/>
    <property type="match status" value="1"/>
</dbReference>
<dbReference type="InterPro" id="IPR011009">
    <property type="entry name" value="Kinase-like_dom_sf"/>
</dbReference>
<dbReference type="InterPro" id="IPR039046">
    <property type="entry name" value="PDPK1"/>
</dbReference>
<dbReference type="InterPro" id="IPR000719">
    <property type="entry name" value="Prot_kinase_dom"/>
</dbReference>
<dbReference type="InterPro" id="IPR008271">
    <property type="entry name" value="Ser/Thr_kinase_AS"/>
</dbReference>
<dbReference type="InterPro" id="IPR050236">
    <property type="entry name" value="Ser_Thr_kinase_AGC"/>
</dbReference>
<dbReference type="PANTHER" id="PTHR24356:SF163">
    <property type="entry name" value="3-PHOSPHOINOSITIDE-DEPENDENT PROTEIN KINASE 1-RELATED"/>
    <property type="match status" value="1"/>
</dbReference>
<dbReference type="PANTHER" id="PTHR24356">
    <property type="entry name" value="SERINE/THREONINE-PROTEIN KINASE"/>
    <property type="match status" value="1"/>
</dbReference>
<dbReference type="Pfam" id="PF00069">
    <property type="entry name" value="Pkinase"/>
    <property type="match status" value="1"/>
</dbReference>
<dbReference type="SMART" id="SM00220">
    <property type="entry name" value="S_TKc"/>
    <property type="match status" value="1"/>
</dbReference>
<dbReference type="SUPFAM" id="SSF56112">
    <property type="entry name" value="Protein kinase-like (PK-like)"/>
    <property type="match status" value="2"/>
</dbReference>
<dbReference type="PROSITE" id="PS00107">
    <property type="entry name" value="PROTEIN_KINASE_ATP"/>
    <property type="match status" value="1"/>
</dbReference>
<dbReference type="PROSITE" id="PS50011">
    <property type="entry name" value="PROTEIN_KINASE_DOM"/>
    <property type="match status" value="1"/>
</dbReference>
<dbReference type="PROSITE" id="PS00108">
    <property type="entry name" value="PROTEIN_KINASE_ST"/>
    <property type="match status" value="1"/>
</dbReference>
<sequence>MASSHFGPASPASSTPPPSSAYARLIAPTITRNSSSSSSRSTTTCSSTSSVQAVPMRPPPIETSTAATSRSQLPSNRHSENEAEHDTSYTSPGLSVGGRGGLARNGPRSNRLGTSPQARHVPPSIVALSPSPSPILNMASKRQSNTETVSGTSPSTPLGKSFLAQQDLSPNSSTIPLRVTISVDPNDRLSHDRESHSAERPRSSGNSPVRGRHGHLSTPSSPTNSYRALGGKPRTLSVDAGQNWGGSHRSRARDGDDRERRQSQVSSASSGALKKHSLDDWVLGEELGVGSYSTVYCVTPSANTHSPTSPQPARKYALKVINQAHLIQEKKVKYAMVERDALIRLSDPRPSKGHKRGVSSSSSSGYAQTGSAGKRRSTASIGGQSSMASVSGGTVSNSKKDTRDRLSIVTTSSAASSPVLTASSGSTQLSPTAVSGGGGNIKGRRPSRSAEPPTPVQEQTEMLIRGGEDGKDGQDGQETPSREWDRDRDWDNMTRSRPPSPVREESAEGGEKEKDEEERSGAEPVELGAAIHLTLPPPQIPSTPEPRGSPLLSTDGHRTSRETPRDRPHLTPKRRRQSLAPSERSVKSASTTGKMSAAAHPGVVRLYSTFNDSSSLYFVLSLASNGELASIIRKHGSLDITSARYYAAQLIDTLEFVHSRGVIHRDLKPENILLDEDMRIKITDFGSAKIIAKDEPIVDDSSRSRSFVGSADFVSPEVLRNEVATTASDIWAFGCVLYQFICGKPPFRGATDYLTFQKILKREVEFPKGIDEDAKSLIDTILDLEPNLRPSITFIKTHPFFQSIDFSTLWTIPAPPISSGLREPSKSTTLAQLEASDIWGVFEGSDVGEEDEDGFEYDADTVSPRPEGGAVGEGMMEPLFDRRAAASAVHNVDHPKFSRLRNQYINLGEDLDPPRPAYAGAGTGGRGKREKEVEKKKGEKARGLSHGSESSGGNRSALAGWLEAIKFGGAGGGGMSGSATSVAASDTVRTPGTGTGTGPGSRPGSRAGIPSFGLGPGSGSRSNRGSGASMRSDEARDLSMSLGGLRMNMSKASEFDKWTPLLLANESIIFTSPITLRTSSPALQLHLPAFLLPAPKKRQLVLTDFPRLLMIKDDNEADGDPAGSDSGAGLSSSSHVESGGGGVGGGGRGGGHGSLRIKGEAVFVPRPSTATGSSTTKGGGYSAVPNAVMDVQEKGSKGFTVQTPGMVYYCHVDSVELRAKWMAAIHRVGL</sequence>
<name>PDK1_CRYNH</name>
<organism evidence="12">
    <name type="scientific">Cryptococcus neoformans var. grubii serotype A (strain H99 / ATCC 208821 / CBS 10515 / FGSC 9487)</name>
    <name type="common">Filobasidiella neoformans var. grubii</name>
    <dbReference type="NCBI Taxonomy" id="235443"/>
    <lineage>
        <taxon>Eukaryota</taxon>
        <taxon>Fungi</taxon>
        <taxon>Dikarya</taxon>
        <taxon>Basidiomycota</taxon>
        <taxon>Agaricomycotina</taxon>
        <taxon>Tremellomycetes</taxon>
        <taxon>Tremellales</taxon>
        <taxon>Cryptococcaceae</taxon>
        <taxon>Cryptococcus</taxon>
        <taxon>Cryptococcus neoformans species complex</taxon>
    </lineage>
</organism>
<protein>
    <recommendedName>
        <fullName evidence="8">Serine/threonine-protein kinase PDK1</fullName>
        <ecNumber evidence="3">2.7.11.1</ecNumber>
    </recommendedName>
</protein>
<proteinExistence type="inferred from homology"/>
<accession>J9VH94</accession>
<gene>
    <name evidence="8" type="primary">PDK1</name>
    <name evidence="9" type="synonym">PKH2-02</name>
    <name evidence="11" type="ORF">CNAG_02915</name>
</gene>
<keyword id="KW-0067">ATP-binding</keyword>
<keyword id="KW-0418">Kinase</keyword>
<keyword id="KW-0547">Nucleotide-binding</keyword>
<keyword id="KW-0723">Serine/threonine-protein kinase</keyword>
<keyword id="KW-0808">Transferase</keyword>
<evidence type="ECO:0000250" key="1">
    <source>
        <dbReference type="UniProtKB" id="O15530"/>
    </source>
</evidence>
<evidence type="ECO:0000250" key="2">
    <source>
        <dbReference type="UniProtKB" id="Q12236"/>
    </source>
</evidence>
<evidence type="ECO:0000250" key="3">
    <source>
        <dbReference type="UniProtKB" id="Q12701"/>
    </source>
</evidence>
<evidence type="ECO:0000255" key="4">
    <source>
        <dbReference type="PROSITE-ProRule" id="PRU00159"/>
    </source>
</evidence>
<evidence type="ECO:0000256" key="5">
    <source>
        <dbReference type="SAM" id="MobiDB-lite"/>
    </source>
</evidence>
<evidence type="ECO:0000269" key="6">
    <source>
    </source>
</evidence>
<evidence type="ECO:0000269" key="7">
    <source>
    </source>
</evidence>
<evidence type="ECO:0000303" key="8">
    <source>
    </source>
</evidence>
<evidence type="ECO:0000303" key="9">
    <source>
    </source>
</evidence>
<evidence type="ECO:0000305" key="10"/>
<evidence type="ECO:0000312" key="11">
    <source>
        <dbReference type="EMBL" id="AFR93777.2"/>
    </source>
</evidence>
<evidence type="ECO:0000312" key="12">
    <source>
        <dbReference type="Proteomes" id="UP000010091"/>
    </source>
</evidence>
<reference evidence="12" key="1">
    <citation type="journal article" date="2014" name="PLoS Genet.">
        <title>Analysis of the genome and transcriptome of Cryptococcus neoformans var. grubii reveals complex RNA expression and microevolution leading to virulence attenuation.</title>
        <authorList>
            <person name="Janbon G."/>
            <person name="Ormerod K.L."/>
            <person name="Paulet D."/>
            <person name="Byrnes E.J. III"/>
            <person name="Yadav V."/>
            <person name="Chatterjee G."/>
            <person name="Mullapudi N."/>
            <person name="Hon C.-C."/>
            <person name="Billmyre R.B."/>
            <person name="Brunel F."/>
            <person name="Bahn Y.-S."/>
            <person name="Chen W."/>
            <person name="Chen Y."/>
            <person name="Chow E.W.L."/>
            <person name="Coppee J.-Y."/>
            <person name="Floyd-Averette A."/>
            <person name="Gaillardin C."/>
            <person name="Gerik K.J."/>
            <person name="Goldberg J."/>
            <person name="Gonzalez-Hilarion S."/>
            <person name="Gujja S."/>
            <person name="Hamlin J.L."/>
            <person name="Hsueh Y.-P."/>
            <person name="Ianiri G."/>
            <person name="Jones S."/>
            <person name="Kodira C.D."/>
            <person name="Kozubowski L."/>
            <person name="Lam W."/>
            <person name="Marra M."/>
            <person name="Mesner L.D."/>
            <person name="Mieczkowski P.A."/>
            <person name="Moyrand F."/>
            <person name="Nielsen K."/>
            <person name="Proux C."/>
            <person name="Rossignol T."/>
            <person name="Schein J.E."/>
            <person name="Sun S."/>
            <person name="Wollschlaeger C."/>
            <person name="Wood I.A."/>
            <person name="Zeng Q."/>
            <person name="Neuveglise C."/>
            <person name="Newlon C.S."/>
            <person name="Perfect J.R."/>
            <person name="Lodge J.K."/>
            <person name="Idnurm A."/>
            <person name="Stajich J.E."/>
            <person name="Kronstad J.W."/>
            <person name="Sanyal K."/>
            <person name="Heitman J."/>
            <person name="Fraser J.A."/>
            <person name="Cuomo C.A."/>
            <person name="Dietrich F.S."/>
        </authorList>
    </citation>
    <scope>NUCLEOTIDE SEQUENCE [LARGE SCALE GENOMIC DNA]</scope>
    <source>
        <strain>H99 / ATCC 208821 / CBS 10515 / FGSC 9487</strain>
    </source>
</reference>
<reference evidence="10" key="2">
    <citation type="journal article" date="2012" name="Mol. Microbiol.">
        <title>Involvement of PDK1, PKC and TOR signalling pathways in basal fluconazole tolerance in Cryptococcus neoformans.</title>
        <authorList>
            <person name="Lee H."/>
            <person name="Khanal Lamichhane A."/>
            <person name="Garraffo H.M."/>
            <person name="Kwon-Chung K.J."/>
            <person name="Chang Y.C."/>
        </authorList>
    </citation>
    <scope>FUNCTION</scope>
    <scope>DISRUPTION PHENOTYPE</scope>
</reference>
<reference evidence="10" key="3">
    <citation type="journal article" date="2013" name="Eukaryot. Cell">
        <title>Cryptococcus neoformans phosphoinositide-dependent kinase 1 (PDK1) ortholog is required for stress tolerance and survival in murine phagocytes.</title>
        <authorList>
            <person name="Chabrier-Rosello Y."/>
            <person name="Gerik K.J."/>
            <person name="Koselny K."/>
            <person name="DiDone L."/>
            <person name="Lodge J.K."/>
            <person name="Krysan D.J."/>
        </authorList>
    </citation>
    <scope>FUNCTION</scope>
    <scope>DISRUPTION PHENOTYPE</scope>
    <source>
        <strain>CM018</strain>
    </source>
</reference>
<comment type="function">
    <text evidence="2 6 7">Serine/threonine-protein kinase that functions in the sphingolipid-mediated signaling pathway, regulating organization of the plasma membrane (By similarity). May phosphorylate PKC1 to activate the cell integrity MAPK cascade during cell wall and membrane stress (PubMed:22339665, PubMed:23087368). May regulate sphingolipid metabolism upstream of YPK1 (PubMed:22339665).</text>
</comment>
<comment type="catalytic activity">
    <reaction evidence="3">
        <text>L-seryl-[protein] + ATP = O-phospho-L-seryl-[protein] + ADP + H(+)</text>
        <dbReference type="Rhea" id="RHEA:17989"/>
        <dbReference type="Rhea" id="RHEA-COMP:9863"/>
        <dbReference type="Rhea" id="RHEA-COMP:11604"/>
        <dbReference type="ChEBI" id="CHEBI:15378"/>
        <dbReference type="ChEBI" id="CHEBI:29999"/>
        <dbReference type="ChEBI" id="CHEBI:30616"/>
        <dbReference type="ChEBI" id="CHEBI:83421"/>
        <dbReference type="ChEBI" id="CHEBI:456216"/>
        <dbReference type="EC" id="2.7.11.1"/>
    </reaction>
</comment>
<comment type="catalytic activity">
    <reaction evidence="3">
        <text>L-threonyl-[protein] + ATP = O-phospho-L-threonyl-[protein] + ADP + H(+)</text>
        <dbReference type="Rhea" id="RHEA:46608"/>
        <dbReference type="Rhea" id="RHEA-COMP:11060"/>
        <dbReference type="Rhea" id="RHEA-COMP:11605"/>
        <dbReference type="ChEBI" id="CHEBI:15378"/>
        <dbReference type="ChEBI" id="CHEBI:30013"/>
        <dbReference type="ChEBI" id="CHEBI:30616"/>
        <dbReference type="ChEBI" id="CHEBI:61977"/>
        <dbReference type="ChEBI" id="CHEBI:456216"/>
        <dbReference type="EC" id="2.7.11.1"/>
    </reaction>
</comment>
<comment type="domain">
    <text evidence="10">The protein kinase domain contains a 228 residue insertion between the ATP binding site and the active site.</text>
</comment>
<comment type="disruption phenotype">
    <text evidence="6 7">Cell integrity defects (PubMed:23087368). Decreases virulence in a moth infection model (PubMed:23087368). Decreases virulence in a mouse systemic infection model (PubMed:22339665). Decreases cell population growth in macrophages (PubMed:23087368). Abnormal sphingolipid metabolism (PubMed:22339665). Sensitive to: high temperature; osmotic stress; sodium dodecyl sulfate; Congo Red; caffeine; sirolimus; Calcofluor White; amphotericin B; fluconazole; OSU-03012; hydrogen peroxide; diamide; sodium nitrite; myriocin (phytosphingosine biosynthesis inhibitor); aureobasidin A (inositol-containing sphingolipid biosynthesis inhibitor); phytosphingosine; OSU-03012 and fluconazole (PubMed:22339665, PubMed:23087368). Decreases PKC1 activation (PubMed:23087368). Decreases MPK1 phosphorylation during cell wall stress induced by Calcofluor White and fluconazole (PubMed:22339665, PubMed:23087368). Decreases melanin levels (PubMed:23087368).</text>
</comment>
<comment type="similarity">
    <text evidence="10">Belongs to the protein kinase superfamily. AGC Ser/Thr protein kinase family. PDPK1 subfamily.</text>
</comment>
<feature type="chain" id="PRO_0000451207" description="Serine/threonine-protein kinase PDK1">
    <location>
        <begin position="1"/>
        <end position="1230"/>
    </location>
</feature>
<feature type="domain" description="Protein kinase" evidence="4">
    <location>
        <begin position="281"/>
        <end position="801"/>
    </location>
</feature>
<feature type="region of interest" description="Disordered" evidence="5">
    <location>
        <begin position="1"/>
        <end position="277"/>
    </location>
</feature>
<feature type="region of interest" description="Disordered" evidence="5">
    <location>
        <begin position="345"/>
        <end position="522"/>
    </location>
</feature>
<feature type="region of interest" description="Disordered" evidence="5">
    <location>
        <begin position="534"/>
        <end position="597"/>
    </location>
</feature>
<feature type="region of interest" description="Disordered" evidence="5">
    <location>
        <begin position="850"/>
        <end position="871"/>
    </location>
</feature>
<feature type="region of interest" description="Disordered" evidence="5">
    <location>
        <begin position="907"/>
        <end position="955"/>
    </location>
</feature>
<feature type="region of interest" description="Disordered" evidence="5">
    <location>
        <begin position="972"/>
        <end position="1035"/>
    </location>
</feature>
<feature type="region of interest" description="Disordered" evidence="5">
    <location>
        <begin position="1116"/>
        <end position="1152"/>
    </location>
</feature>
<feature type="compositionally biased region" description="Low complexity" evidence="5">
    <location>
        <begin position="34"/>
        <end position="50"/>
    </location>
</feature>
<feature type="compositionally biased region" description="Polar residues" evidence="5">
    <location>
        <begin position="62"/>
        <end position="76"/>
    </location>
</feature>
<feature type="compositionally biased region" description="Basic and acidic residues" evidence="5">
    <location>
        <begin position="77"/>
        <end position="87"/>
    </location>
</feature>
<feature type="compositionally biased region" description="Polar residues" evidence="5">
    <location>
        <begin position="107"/>
        <end position="117"/>
    </location>
</feature>
<feature type="compositionally biased region" description="Polar residues" evidence="5">
    <location>
        <begin position="140"/>
        <end position="175"/>
    </location>
</feature>
<feature type="compositionally biased region" description="Basic and acidic residues" evidence="5">
    <location>
        <begin position="185"/>
        <end position="202"/>
    </location>
</feature>
<feature type="compositionally biased region" description="Polar residues" evidence="5">
    <location>
        <begin position="217"/>
        <end position="226"/>
    </location>
</feature>
<feature type="compositionally biased region" description="Basic and acidic residues" evidence="5">
    <location>
        <begin position="252"/>
        <end position="262"/>
    </location>
</feature>
<feature type="compositionally biased region" description="Polar residues" evidence="5">
    <location>
        <begin position="378"/>
        <end position="397"/>
    </location>
</feature>
<feature type="compositionally biased region" description="Polar residues" evidence="5">
    <location>
        <begin position="408"/>
        <end position="433"/>
    </location>
</feature>
<feature type="compositionally biased region" description="Basic and acidic residues" evidence="5">
    <location>
        <begin position="466"/>
        <end position="494"/>
    </location>
</feature>
<feature type="compositionally biased region" description="Basic and acidic residues" evidence="5">
    <location>
        <begin position="502"/>
        <end position="521"/>
    </location>
</feature>
<feature type="compositionally biased region" description="Pro residues" evidence="5">
    <location>
        <begin position="535"/>
        <end position="544"/>
    </location>
</feature>
<feature type="compositionally biased region" description="Basic and acidic residues" evidence="5">
    <location>
        <begin position="555"/>
        <end position="569"/>
    </location>
</feature>
<feature type="compositionally biased region" description="Acidic residues" evidence="5">
    <location>
        <begin position="850"/>
        <end position="859"/>
    </location>
</feature>
<feature type="compositionally biased region" description="Basic and acidic residues" evidence="5">
    <location>
        <begin position="927"/>
        <end position="942"/>
    </location>
</feature>
<feature type="compositionally biased region" description="Low complexity" evidence="5">
    <location>
        <begin position="977"/>
        <end position="992"/>
    </location>
</feature>
<feature type="compositionally biased region" description="Low complexity" evidence="5">
    <location>
        <begin position="1002"/>
        <end position="1030"/>
    </location>
</feature>
<feature type="compositionally biased region" description="Low complexity" evidence="5">
    <location>
        <begin position="1120"/>
        <end position="1137"/>
    </location>
</feature>
<feature type="compositionally biased region" description="Gly residues" evidence="5">
    <location>
        <begin position="1138"/>
        <end position="1152"/>
    </location>
</feature>
<feature type="active site" description="Proton acceptor" evidence="4">
    <location>
        <position position="666"/>
    </location>
</feature>
<feature type="binding site" evidence="1">
    <location>
        <begin position="291"/>
        <end position="293"/>
    </location>
    <ligand>
        <name>ATP</name>
        <dbReference type="ChEBI" id="CHEBI:30616"/>
    </ligand>
</feature>
<feature type="binding site" evidence="1">
    <location>
        <position position="319"/>
    </location>
    <ligand>
        <name>ATP</name>
        <dbReference type="ChEBI" id="CHEBI:30616"/>
    </ligand>
</feature>
<feature type="binding site" evidence="1">
    <location>
        <begin position="621"/>
        <end position="623"/>
    </location>
    <ligand>
        <name>ATP</name>
        <dbReference type="ChEBI" id="CHEBI:30616"/>
    </ligand>
</feature>
<feature type="binding site" evidence="1">
    <location>
        <position position="627"/>
    </location>
    <ligand>
        <name>ATP</name>
        <dbReference type="ChEBI" id="CHEBI:30616"/>
    </ligand>
</feature>
<feature type="binding site" evidence="1">
    <location>
        <position position="670"/>
    </location>
    <ligand>
        <name>ATP</name>
        <dbReference type="ChEBI" id="CHEBI:30616"/>
    </ligand>
</feature>
<feature type="binding site" evidence="1">
    <location>
        <position position="684"/>
    </location>
    <ligand>
        <name>ATP</name>
        <dbReference type="ChEBI" id="CHEBI:30616"/>
    </ligand>
</feature>